<evidence type="ECO:0000255" key="1">
    <source>
        <dbReference type="HAMAP-Rule" id="MF_01006"/>
    </source>
</evidence>
<name>UPPP_ELUMP</name>
<feature type="chain" id="PRO_1000197363" description="Undecaprenyl-diphosphatase">
    <location>
        <begin position="1"/>
        <end position="258"/>
    </location>
</feature>
<feature type="transmembrane region" description="Helical" evidence="1">
    <location>
        <begin position="14"/>
        <end position="34"/>
    </location>
</feature>
<feature type="transmembrane region" description="Helical" evidence="1">
    <location>
        <begin position="39"/>
        <end position="59"/>
    </location>
</feature>
<feature type="transmembrane region" description="Helical" evidence="1">
    <location>
        <begin position="79"/>
        <end position="99"/>
    </location>
</feature>
<feature type="transmembrane region" description="Helical" evidence="1">
    <location>
        <begin position="106"/>
        <end position="126"/>
    </location>
</feature>
<feature type="transmembrane region" description="Helical" evidence="1">
    <location>
        <begin position="136"/>
        <end position="156"/>
    </location>
</feature>
<feature type="transmembrane region" description="Helical" evidence="1">
    <location>
        <begin position="176"/>
        <end position="196"/>
    </location>
</feature>
<feature type="transmembrane region" description="Helical" evidence="1">
    <location>
        <begin position="209"/>
        <end position="229"/>
    </location>
</feature>
<feature type="transmembrane region" description="Helical" evidence="1">
    <location>
        <begin position="237"/>
        <end position="257"/>
    </location>
</feature>
<comment type="function">
    <text evidence="1">Catalyzes the dephosphorylation of undecaprenyl diphosphate (UPP). Confers resistance to bacitracin.</text>
</comment>
<comment type="catalytic activity">
    <reaction evidence="1">
        <text>di-trans,octa-cis-undecaprenyl diphosphate + H2O = di-trans,octa-cis-undecaprenyl phosphate + phosphate + H(+)</text>
        <dbReference type="Rhea" id="RHEA:28094"/>
        <dbReference type="ChEBI" id="CHEBI:15377"/>
        <dbReference type="ChEBI" id="CHEBI:15378"/>
        <dbReference type="ChEBI" id="CHEBI:43474"/>
        <dbReference type="ChEBI" id="CHEBI:58405"/>
        <dbReference type="ChEBI" id="CHEBI:60392"/>
        <dbReference type="EC" id="3.6.1.27"/>
    </reaction>
</comment>
<comment type="subcellular location">
    <subcellularLocation>
        <location evidence="1">Cell membrane</location>
        <topology evidence="1">Multi-pass membrane protein</topology>
    </subcellularLocation>
</comment>
<comment type="miscellaneous">
    <text>Bacitracin is thought to be involved in the inhibition of peptidoglycan synthesis by sequestering undecaprenyl diphosphate, thereby reducing the pool of lipid carrier available.</text>
</comment>
<comment type="similarity">
    <text evidence="1">Belongs to the UppP family.</text>
</comment>
<keyword id="KW-0046">Antibiotic resistance</keyword>
<keyword id="KW-1003">Cell membrane</keyword>
<keyword id="KW-0133">Cell shape</keyword>
<keyword id="KW-0961">Cell wall biogenesis/degradation</keyword>
<keyword id="KW-0378">Hydrolase</keyword>
<keyword id="KW-0472">Membrane</keyword>
<keyword id="KW-0573">Peptidoglycan synthesis</keyword>
<keyword id="KW-1185">Reference proteome</keyword>
<keyword id="KW-0812">Transmembrane</keyword>
<keyword id="KW-1133">Transmembrane helix</keyword>
<proteinExistence type="inferred from homology"/>
<accession>B2KE93</accession>
<gene>
    <name evidence="1" type="primary">uppP</name>
    <name type="ordered locus">Emin_1289</name>
</gene>
<sequence>MTSVNAVLLGLVQAAGEFLPISSSAHLVLMPWLLGMEYQGLTYDIFLHLATLIAVLIYFRKEWFTIIKDGLTKPKTEEGKILWLLVLGTIPAAICGVLFEDWIETVFRSPFVIAAALIVFAVILHLADKRAGQKDVALNVKTVLIIGCAQALALMPGVSRSGITITAALFLGFSRAESAKISFLLSTPIIAGAAVLKLKDINPADINAAFIAGFLTAAIFGWLFIKFLMNYVQKHNFNIFVVYRIALGVIIIITALMK</sequence>
<reference key="1">
    <citation type="journal article" date="2009" name="Appl. Environ. Microbiol.">
        <title>Genomic analysis of 'Elusimicrobium minutum,' the first cultivated representative of the phylum 'Elusimicrobia' (formerly termite group 1).</title>
        <authorList>
            <person name="Herlemann D.P.R."/>
            <person name="Geissinger O."/>
            <person name="Ikeda-Ohtsubo W."/>
            <person name="Kunin V."/>
            <person name="Sun H."/>
            <person name="Lapidus A."/>
            <person name="Hugenholtz P."/>
            <person name="Brune A."/>
        </authorList>
    </citation>
    <scope>NUCLEOTIDE SEQUENCE [LARGE SCALE GENOMIC DNA]</scope>
    <source>
        <strain>Pei191</strain>
    </source>
</reference>
<protein>
    <recommendedName>
        <fullName evidence="1">Undecaprenyl-diphosphatase</fullName>
        <ecNumber evidence="1">3.6.1.27</ecNumber>
    </recommendedName>
    <alternativeName>
        <fullName evidence="1">Bacitracin resistance protein</fullName>
    </alternativeName>
    <alternativeName>
        <fullName evidence="1">Undecaprenyl pyrophosphate phosphatase</fullName>
    </alternativeName>
</protein>
<organism>
    <name type="scientific">Elusimicrobium minutum (strain Pei191)</name>
    <dbReference type="NCBI Taxonomy" id="445932"/>
    <lineage>
        <taxon>Bacteria</taxon>
        <taxon>Pseudomonadati</taxon>
        <taxon>Elusimicrobiota</taxon>
        <taxon>Elusimicrobia</taxon>
        <taxon>Elusimicrobiales</taxon>
        <taxon>Elusimicrobiaceae</taxon>
        <taxon>Elusimicrobium</taxon>
    </lineage>
</organism>
<dbReference type="EC" id="3.6.1.27" evidence="1"/>
<dbReference type="EMBL" id="CP001055">
    <property type="protein sequence ID" value="ACC98839.1"/>
    <property type="molecule type" value="Genomic_DNA"/>
</dbReference>
<dbReference type="RefSeq" id="WP_012415454.1">
    <property type="nucleotide sequence ID" value="NC_010644.1"/>
</dbReference>
<dbReference type="SMR" id="B2KE93"/>
<dbReference type="STRING" id="445932.Emin_1289"/>
<dbReference type="KEGG" id="emi:Emin_1289"/>
<dbReference type="HOGENOM" id="CLU_060296_1_0_0"/>
<dbReference type="OrthoDB" id="9808289at2"/>
<dbReference type="Proteomes" id="UP000001029">
    <property type="component" value="Chromosome"/>
</dbReference>
<dbReference type="GO" id="GO:0005886">
    <property type="term" value="C:plasma membrane"/>
    <property type="evidence" value="ECO:0007669"/>
    <property type="project" value="UniProtKB-SubCell"/>
</dbReference>
<dbReference type="GO" id="GO:0050380">
    <property type="term" value="F:undecaprenyl-diphosphatase activity"/>
    <property type="evidence" value="ECO:0007669"/>
    <property type="project" value="UniProtKB-UniRule"/>
</dbReference>
<dbReference type="GO" id="GO:0071555">
    <property type="term" value="P:cell wall organization"/>
    <property type="evidence" value="ECO:0007669"/>
    <property type="project" value="UniProtKB-KW"/>
</dbReference>
<dbReference type="GO" id="GO:0009252">
    <property type="term" value="P:peptidoglycan biosynthetic process"/>
    <property type="evidence" value="ECO:0007669"/>
    <property type="project" value="UniProtKB-KW"/>
</dbReference>
<dbReference type="GO" id="GO:0008360">
    <property type="term" value="P:regulation of cell shape"/>
    <property type="evidence" value="ECO:0007669"/>
    <property type="project" value="UniProtKB-KW"/>
</dbReference>
<dbReference type="GO" id="GO:0046677">
    <property type="term" value="P:response to antibiotic"/>
    <property type="evidence" value="ECO:0007669"/>
    <property type="project" value="UniProtKB-UniRule"/>
</dbReference>
<dbReference type="HAMAP" id="MF_01006">
    <property type="entry name" value="Undec_diphosphatase"/>
    <property type="match status" value="1"/>
</dbReference>
<dbReference type="InterPro" id="IPR003824">
    <property type="entry name" value="UppP"/>
</dbReference>
<dbReference type="PANTHER" id="PTHR30622">
    <property type="entry name" value="UNDECAPRENYL-DIPHOSPHATASE"/>
    <property type="match status" value="1"/>
</dbReference>
<dbReference type="PANTHER" id="PTHR30622:SF4">
    <property type="entry name" value="UNDECAPRENYL-DIPHOSPHATASE"/>
    <property type="match status" value="1"/>
</dbReference>
<dbReference type="Pfam" id="PF02673">
    <property type="entry name" value="BacA"/>
    <property type="match status" value="1"/>
</dbReference>